<protein>
    <recommendedName>
        <fullName>Actin-52</fullName>
        <ecNumber evidence="1">3.6.4.-</ecNumber>
    </recommendedName>
</protein>
<organism>
    <name type="scientific">Solanum lycopersicum</name>
    <name type="common">Tomato</name>
    <name type="synonym">Lycopersicon esculentum</name>
    <dbReference type="NCBI Taxonomy" id="4081"/>
    <lineage>
        <taxon>Eukaryota</taxon>
        <taxon>Viridiplantae</taxon>
        <taxon>Streptophyta</taxon>
        <taxon>Embryophyta</taxon>
        <taxon>Tracheophyta</taxon>
        <taxon>Spermatophyta</taxon>
        <taxon>Magnoliopsida</taxon>
        <taxon>eudicotyledons</taxon>
        <taxon>Gunneridae</taxon>
        <taxon>Pentapetalae</taxon>
        <taxon>asterids</taxon>
        <taxon>lamiids</taxon>
        <taxon>Solanales</taxon>
        <taxon>Solanaceae</taxon>
        <taxon>Solanoideae</taxon>
        <taxon>Solaneae</taxon>
        <taxon>Solanum</taxon>
        <taxon>Solanum subgen. Lycopersicon</taxon>
    </lineage>
</organism>
<keyword id="KW-0067">ATP-binding</keyword>
<keyword id="KW-0963">Cytoplasm</keyword>
<keyword id="KW-0206">Cytoskeleton</keyword>
<keyword id="KW-0378">Hydrolase</keyword>
<keyword id="KW-0547">Nucleotide-binding</keyword>
<keyword id="KW-1185">Reference proteome</keyword>
<sequence>AGFAGDDAPRAVFPSIVGRPRHTGVMVGMGQKDAYVGDEAQSKRGILTLKYPIEHGIVSNWDDMEKIWHHTFYNELRVAPEADPVLLTEAPLNPKANREKMTQIMFETFNTPAMYVAIQAVLSLYASGRTTGIVLDSGDGVSHTVPIYEGYALPHAIPRLDLAGRDLTDHLMKILTERGYSFTTTAEREIVRDVKEKLSYIALDYEQEIETAKTSSSVEKSYELPDGQVITIGSERFRCPEVLFQPSMIGMEAAGIHETTYNSIMKCDVDIRKDLYGNIVLSGGTTMFPGIADRMSKEITALAPSSMKIKVVAPPERKYSVWIGGSILASLSTFQQ</sequence>
<dbReference type="EC" id="3.6.4.-" evidence="1"/>
<dbReference type="EMBL" id="U60482">
    <property type="protein sequence ID" value="AAB40095.1"/>
    <property type="molecule type" value="Genomic_DNA"/>
</dbReference>
<dbReference type="SMR" id="Q96484"/>
<dbReference type="STRING" id="4081.Q96484"/>
<dbReference type="PaxDb" id="4081-Solyc10g080500.1.1"/>
<dbReference type="eggNOG" id="KOG0676">
    <property type="taxonomic scope" value="Eukaryota"/>
</dbReference>
<dbReference type="InParanoid" id="Q96484"/>
<dbReference type="Proteomes" id="UP000004994">
    <property type="component" value="Unplaced"/>
</dbReference>
<dbReference type="ExpressionAtlas" id="Q96484">
    <property type="expression patterns" value="baseline and differential"/>
</dbReference>
<dbReference type="GO" id="GO:0015629">
    <property type="term" value="C:actin cytoskeleton"/>
    <property type="evidence" value="ECO:0000318"/>
    <property type="project" value="GO_Central"/>
</dbReference>
<dbReference type="GO" id="GO:0005737">
    <property type="term" value="C:cytoplasm"/>
    <property type="evidence" value="ECO:0007669"/>
    <property type="project" value="UniProtKB-KW"/>
</dbReference>
<dbReference type="GO" id="GO:0005524">
    <property type="term" value="F:ATP binding"/>
    <property type="evidence" value="ECO:0007669"/>
    <property type="project" value="UniProtKB-KW"/>
</dbReference>
<dbReference type="GO" id="GO:0016787">
    <property type="term" value="F:hydrolase activity"/>
    <property type="evidence" value="ECO:0007669"/>
    <property type="project" value="UniProtKB-KW"/>
</dbReference>
<dbReference type="CDD" id="cd10224">
    <property type="entry name" value="ASKHA_NBD_actin"/>
    <property type="match status" value="1"/>
</dbReference>
<dbReference type="FunFam" id="3.30.420.40:FF:000291">
    <property type="entry name" value="Actin, alpha skeletal muscle"/>
    <property type="match status" value="1"/>
</dbReference>
<dbReference type="FunFam" id="3.90.640.10:FF:000001">
    <property type="entry name" value="Actin, muscle"/>
    <property type="match status" value="1"/>
</dbReference>
<dbReference type="FunFam" id="3.30.420.40:FF:000404">
    <property type="entry name" value="Major actin"/>
    <property type="match status" value="1"/>
</dbReference>
<dbReference type="Gene3D" id="3.30.420.40">
    <property type="match status" value="2"/>
</dbReference>
<dbReference type="Gene3D" id="3.90.640.10">
    <property type="entry name" value="Actin, Chain A, domain 4"/>
    <property type="match status" value="1"/>
</dbReference>
<dbReference type="InterPro" id="IPR004000">
    <property type="entry name" value="Actin"/>
</dbReference>
<dbReference type="InterPro" id="IPR020902">
    <property type="entry name" value="Actin/actin-like_CS"/>
</dbReference>
<dbReference type="InterPro" id="IPR004001">
    <property type="entry name" value="Actin_CS"/>
</dbReference>
<dbReference type="InterPro" id="IPR043129">
    <property type="entry name" value="ATPase_NBD"/>
</dbReference>
<dbReference type="PANTHER" id="PTHR11937">
    <property type="entry name" value="ACTIN"/>
    <property type="match status" value="1"/>
</dbReference>
<dbReference type="Pfam" id="PF00022">
    <property type="entry name" value="Actin"/>
    <property type="match status" value="1"/>
</dbReference>
<dbReference type="PRINTS" id="PR00190">
    <property type="entry name" value="ACTIN"/>
</dbReference>
<dbReference type="SMART" id="SM00268">
    <property type="entry name" value="ACTIN"/>
    <property type="match status" value="1"/>
</dbReference>
<dbReference type="SUPFAM" id="SSF53067">
    <property type="entry name" value="Actin-like ATPase domain"/>
    <property type="match status" value="2"/>
</dbReference>
<dbReference type="PROSITE" id="PS00406">
    <property type="entry name" value="ACTINS_1"/>
    <property type="match status" value="1"/>
</dbReference>
<dbReference type="PROSITE" id="PS01132">
    <property type="entry name" value="ACTINS_ACT_LIKE"/>
    <property type="match status" value="1"/>
</dbReference>
<proteinExistence type="inferred from homology"/>
<feature type="chain" id="PRO_0000088957" description="Actin-52">
    <location>
        <begin position="1" status="less than"/>
        <end position="336" status="greater than"/>
    </location>
</feature>
<feature type="non-terminal residue">
    <location>
        <position position="1"/>
    </location>
</feature>
<feature type="non-terminal residue">
    <location>
        <position position="336"/>
    </location>
</feature>
<accession>Q96484</accession>
<reference key="1">
    <citation type="journal article" date="1996" name="Mol. Biol. Evol.">
        <title>Phylogeny and substitution rates of angiosperm actin genes.</title>
        <authorList>
            <person name="Moniz de Sa M."/>
            <person name="Drouin G."/>
        </authorList>
    </citation>
    <scope>NUCLEOTIDE SEQUENCE [GENOMIC DNA]</scope>
</reference>
<comment type="function">
    <text>Actins are highly conserved proteins that are involved in various types of cell motility and are ubiquitously expressed in all eukaryotic cells. Essential component of cell cytoskeleton; plays an important role in cytoplasmic streaming, cell shape determination, cell division, organelle movement and extension growth.</text>
</comment>
<comment type="catalytic activity">
    <reaction evidence="1">
        <text>ATP + H2O = ADP + phosphate + H(+)</text>
        <dbReference type="Rhea" id="RHEA:13065"/>
        <dbReference type="ChEBI" id="CHEBI:15377"/>
        <dbReference type="ChEBI" id="CHEBI:15378"/>
        <dbReference type="ChEBI" id="CHEBI:30616"/>
        <dbReference type="ChEBI" id="CHEBI:43474"/>
        <dbReference type="ChEBI" id="CHEBI:456216"/>
    </reaction>
</comment>
<comment type="subcellular location">
    <subcellularLocation>
        <location>Cytoplasm</location>
        <location>Cytoskeleton</location>
    </subcellularLocation>
</comment>
<comment type="miscellaneous">
    <text>There are at least 5 different actin genes in tomato.</text>
</comment>
<comment type="similarity">
    <text evidence="2">Belongs to the actin family.</text>
</comment>
<evidence type="ECO:0000250" key="1">
    <source>
        <dbReference type="UniProtKB" id="P68137"/>
    </source>
</evidence>
<evidence type="ECO:0000305" key="2"/>
<name>ACT3_SOLLC</name>